<accession>Q7WP11</accession>
<name>COQ7_BORBR</name>
<sequence>MSTSSSASALGRRAGPLDGLIGEIDRALRVLSGAATAARPYPAQAPEAPDALSERERRHAAGLMRVNHVGEVCAQALYRGQAAACREPAARELLRQAAAEEVDHLAWCNERLRELGSRPSLLNPFWYTGSFALGVLASYAGVPRNLGFMAETERQVEAHLDGHLRTLPVQDRRSRDIVQKMKEDEAQHRASAERAGGVPLPAPVRGAMRAMSKVMTSTAYWL</sequence>
<comment type="function">
    <text evidence="1">Catalyzes the hydroxylation of 2-nonaprenyl-3-methyl-6-methoxy-1,4-benzoquinol during ubiquinone biosynthesis.</text>
</comment>
<comment type="catalytic activity">
    <reaction evidence="1">
        <text>a 5-methoxy-2-methyl-3-(all-trans-polyprenyl)benzene-1,4-diol + AH2 + O2 = a 3-demethylubiquinol + A + H2O</text>
        <dbReference type="Rhea" id="RHEA:50908"/>
        <dbReference type="Rhea" id="RHEA-COMP:10859"/>
        <dbReference type="Rhea" id="RHEA-COMP:10914"/>
        <dbReference type="ChEBI" id="CHEBI:13193"/>
        <dbReference type="ChEBI" id="CHEBI:15377"/>
        <dbReference type="ChEBI" id="CHEBI:15379"/>
        <dbReference type="ChEBI" id="CHEBI:17499"/>
        <dbReference type="ChEBI" id="CHEBI:84167"/>
        <dbReference type="ChEBI" id="CHEBI:84422"/>
        <dbReference type="EC" id="1.14.99.60"/>
    </reaction>
</comment>
<comment type="cofactor">
    <cofactor evidence="1">
        <name>Fe cation</name>
        <dbReference type="ChEBI" id="CHEBI:24875"/>
    </cofactor>
    <text evidence="1">Binds 2 iron ions per subunit.</text>
</comment>
<comment type="pathway">
    <text evidence="1">Cofactor biosynthesis; ubiquinone biosynthesis.</text>
</comment>
<comment type="subcellular location">
    <subcellularLocation>
        <location evidence="1">Cell membrane</location>
        <topology evidence="1">Peripheral membrane protein</topology>
    </subcellularLocation>
</comment>
<comment type="similarity">
    <text evidence="1">Belongs to the COQ7 family.</text>
</comment>
<evidence type="ECO:0000255" key="1">
    <source>
        <dbReference type="HAMAP-Rule" id="MF_01658"/>
    </source>
</evidence>
<protein>
    <recommendedName>
        <fullName evidence="1">3-demethoxyubiquinol 3-hydroxylase</fullName>
        <shortName evidence="1">DMQ hydroxylase</shortName>
        <ecNumber evidence="1">1.14.99.60</ecNumber>
    </recommendedName>
    <alternativeName>
        <fullName evidence="1">2-nonaprenyl-3-methyl-6-methoxy-1,4-benzoquinol hydroxylase</fullName>
    </alternativeName>
</protein>
<reference key="1">
    <citation type="journal article" date="2003" name="Nat. Genet.">
        <title>Comparative analysis of the genome sequences of Bordetella pertussis, Bordetella parapertussis and Bordetella bronchiseptica.</title>
        <authorList>
            <person name="Parkhill J."/>
            <person name="Sebaihia M."/>
            <person name="Preston A."/>
            <person name="Murphy L.D."/>
            <person name="Thomson N.R."/>
            <person name="Harris D.E."/>
            <person name="Holden M.T.G."/>
            <person name="Churcher C.M."/>
            <person name="Bentley S.D."/>
            <person name="Mungall K.L."/>
            <person name="Cerdeno-Tarraga A.-M."/>
            <person name="Temple L."/>
            <person name="James K.D."/>
            <person name="Harris B."/>
            <person name="Quail M.A."/>
            <person name="Achtman M."/>
            <person name="Atkin R."/>
            <person name="Baker S."/>
            <person name="Basham D."/>
            <person name="Bason N."/>
            <person name="Cherevach I."/>
            <person name="Chillingworth T."/>
            <person name="Collins M."/>
            <person name="Cronin A."/>
            <person name="Davis P."/>
            <person name="Doggett J."/>
            <person name="Feltwell T."/>
            <person name="Goble A."/>
            <person name="Hamlin N."/>
            <person name="Hauser H."/>
            <person name="Holroyd S."/>
            <person name="Jagels K."/>
            <person name="Leather S."/>
            <person name="Moule S."/>
            <person name="Norberczak H."/>
            <person name="O'Neil S."/>
            <person name="Ormond D."/>
            <person name="Price C."/>
            <person name="Rabbinowitsch E."/>
            <person name="Rutter S."/>
            <person name="Sanders M."/>
            <person name="Saunders D."/>
            <person name="Seeger K."/>
            <person name="Sharp S."/>
            <person name="Simmonds M."/>
            <person name="Skelton J."/>
            <person name="Squares R."/>
            <person name="Squares S."/>
            <person name="Stevens K."/>
            <person name="Unwin L."/>
            <person name="Whitehead S."/>
            <person name="Barrell B.G."/>
            <person name="Maskell D.J."/>
        </authorList>
    </citation>
    <scope>NUCLEOTIDE SEQUENCE [LARGE SCALE GENOMIC DNA]</scope>
    <source>
        <strain>ATCC BAA-588 / NCTC 13252 / RB50</strain>
    </source>
</reference>
<gene>
    <name evidence="1" type="primary">coq7</name>
    <name type="ordered locus">BB0874</name>
</gene>
<feature type="chain" id="PRO_0000338658" description="3-demethoxyubiquinol 3-hydroxylase">
    <location>
        <begin position="1"/>
        <end position="222"/>
    </location>
</feature>
<feature type="binding site" evidence="1">
    <location>
        <position position="71"/>
    </location>
    <ligand>
        <name>Fe cation</name>
        <dbReference type="ChEBI" id="CHEBI:24875"/>
        <label>1</label>
    </ligand>
</feature>
<feature type="binding site" evidence="1">
    <location>
        <position position="101"/>
    </location>
    <ligand>
        <name>Fe cation</name>
        <dbReference type="ChEBI" id="CHEBI:24875"/>
        <label>1</label>
    </ligand>
</feature>
<feature type="binding site" evidence="1">
    <location>
        <position position="101"/>
    </location>
    <ligand>
        <name>Fe cation</name>
        <dbReference type="ChEBI" id="CHEBI:24875"/>
        <label>2</label>
    </ligand>
</feature>
<feature type="binding site" evidence="1">
    <location>
        <position position="104"/>
    </location>
    <ligand>
        <name>Fe cation</name>
        <dbReference type="ChEBI" id="CHEBI:24875"/>
        <label>1</label>
    </ligand>
</feature>
<feature type="binding site" evidence="1">
    <location>
        <position position="153"/>
    </location>
    <ligand>
        <name>Fe cation</name>
        <dbReference type="ChEBI" id="CHEBI:24875"/>
        <label>2</label>
    </ligand>
</feature>
<feature type="binding site" evidence="1">
    <location>
        <position position="185"/>
    </location>
    <ligand>
        <name>Fe cation</name>
        <dbReference type="ChEBI" id="CHEBI:24875"/>
        <label>1</label>
    </ligand>
</feature>
<feature type="binding site" evidence="1">
    <location>
        <position position="185"/>
    </location>
    <ligand>
        <name>Fe cation</name>
        <dbReference type="ChEBI" id="CHEBI:24875"/>
        <label>2</label>
    </ligand>
</feature>
<feature type="binding site" evidence="1">
    <location>
        <position position="188"/>
    </location>
    <ligand>
        <name>Fe cation</name>
        <dbReference type="ChEBI" id="CHEBI:24875"/>
        <label>2</label>
    </ligand>
</feature>
<dbReference type="EC" id="1.14.99.60" evidence="1"/>
<dbReference type="EMBL" id="BX640439">
    <property type="protein sequence ID" value="CAE31373.1"/>
    <property type="molecule type" value="Genomic_DNA"/>
</dbReference>
<dbReference type="RefSeq" id="WP_003808447.1">
    <property type="nucleotide sequence ID" value="NC_002927.3"/>
</dbReference>
<dbReference type="SMR" id="Q7WP11"/>
<dbReference type="GeneID" id="93202539"/>
<dbReference type="KEGG" id="bbr:BB0874"/>
<dbReference type="eggNOG" id="COG2941">
    <property type="taxonomic scope" value="Bacteria"/>
</dbReference>
<dbReference type="HOGENOM" id="CLU_088601_0_0_4"/>
<dbReference type="UniPathway" id="UPA00232"/>
<dbReference type="Proteomes" id="UP000001027">
    <property type="component" value="Chromosome"/>
</dbReference>
<dbReference type="GO" id="GO:0005886">
    <property type="term" value="C:plasma membrane"/>
    <property type="evidence" value="ECO:0007669"/>
    <property type="project" value="UniProtKB-SubCell"/>
</dbReference>
<dbReference type="GO" id="GO:0008682">
    <property type="term" value="F:3-demethoxyubiquinol 3-hydroxylase activity"/>
    <property type="evidence" value="ECO:0007669"/>
    <property type="project" value="UniProtKB-EC"/>
</dbReference>
<dbReference type="GO" id="GO:0046872">
    <property type="term" value="F:metal ion binding"/>
    <property type="evidence" value="ECO:0007669"/>
    <property type="project" value="UniProtKB-KW"/>
</dbReference>
<dbReference type="GO" id="GO:0006744">
    <property type="term" value="P:ubiquinone biosynthetic process"/>
    <property type="evidence" value="ECO:0007669"/>
    <property type="project" value="UniProtKB-UniRule"/>
</dbReference>
<dbReference type="CDD" id="cd01042">
    <property type="entry name" value="DMQH"/>
    <property type="match status" value="1"/>
</dbReference>
<dbReference type="Gene3D" id="1.20.1260.10">
    <property type="match status" value="1"/>
</dbReference>
<dbReference type="HAMAP" id="MF_01658">
    <property type="entry name" value="COQ7"/>
    <property type="match status" value="1"/>
</dbReference>
<dbReference type="InterPro" id="IPR047809">
    <property type="entry name" value="COQ7_proteobact"/>
</dbReference>
<dbReference type="InterPro" id="IPR012347">
    <property type="entry name" value="Ferritin-like"/>
</dbReference>
<dbReference type="InterPro" id="IPR009078">
    <property type="entry name" value="Ferritin-like_SF"/>
</dbReference>
<dbReference type="InterPro" id="IPR011566">
    <property type="entry name" value="Ubq_synth_Coq7"/>
</dbReference>
<dbReference type="NCBIfam" id="NF033656">
    <property type="entry name" value="DMQ_monoox_COQ7"/>
    <property type="match status" value="1"/>
</dbReference>
<dbReference type="PANTHER" id="PTHR11237:SF4">
    <property type="entry name" value="5-DEMETHOXYUBIQUINONE HYDROXYLASE, MITOCHONDRIAL"/>
    <property type="match status" value="1"/>
</dbReference>
<dbReference type="PANTHER" id="PTHR11237">
    <property type="entry name" value="COENZYME Q10 BIOSYNTHESIS PROTEIN 7"/>
    <property type="match status" value="1"/>
</dbReference>
<dbReference type="Pfam" id="PF03232">
    <property type="entry name" value="COQ7"/>
    <property type="match status" value="1"/>
</dbReference>
<dbReference type="SUPFAM" id="SSF47240">
    <property type="entry name" value="Ferritin-like"/>
    <property type="match status" value="1"/>
</dbReference>
<organism>
    <name type="scientific">Bordetella bronchiseptica (strain ATCC BAA-588 / NCTC 13252 / RB50)</name>
    <name type="common">Alcaligenes bronchisepticus</name>
    <dbReference type="NCBI Taxonomy" id="257310"/>
    <lineage>
        <taxon>Bacteria</taxon>
        <taxon>Pseudomonadati</taxon>
        <taxon>Pseudomonadota</taxon>
        <taxon>Betaproteobacteria</taxon>
        <taxon>Burkholderiales</taxon>
        <taxon>Alcaligenaceae</taxon>
        <taxon>Bordetella</taxon>
    </lineage>
</organism>
<keyword id="KW-1003">Cell membrane</keyword>
<keyword id="KW-0408">Iron</keyword>
<keyword id="KW-0472">Membrane</keyword>
<keyword id="KW-0479">Metal-binding</keyword>
<keyword id="KW-0503">Monooxygenase</keyword>
<keyword id="KW-0560">Oxidoreductase</keyword>
<keyword id="KW-0831">Ubiquinone biosynthesis</keyword>
<proteinExistence type="inferred from homology"/>